<sequence>MQGYIQESDFNLVEEGFLARDLMEEIINEVSQTEDRDAFFVADLGDVVRKHLRFLKALPRVKPFYAVKCNSSKGVVKILAELGAGFDCASKTEIELVQDVGVAPERIIYANPCKQISQIKYAAKNGVQMMTFDNEVELSKVSRSHPNARMVLRIATDDSKSSARLSVKFGAPLKSCRRLLEMAKNLSVDVIGVSFHVGSGCTDSKAYTQAISDARLVFEMASEFGYKMWLLDIGGGFPGTEDSKIRFEEIAGVINPALDMYFPESSDVQIIAEPGRYYVASAFSLAVNVIAKKEVEHSVSDDEENESSKSIMYYVNDGVYGSFNCLVFDHAHPKPILHKKPSPDQPLYTSSLWGPTCDGLDQIAERVQLPELHVGDWLLFENMGAYTIAASSNFNGFQQSPVHYAMPRAAWKAVQLLQRGLQQTEEKENVCTPMSCGWEISDSLCFTRTFAATSII</sequence>
<feature type="chain" id="PRO_0000149897" description="Antizyme inhibitor 2">
    <location>
        <begin position="1"/>
        <end position="456"/>
    </location>
</feature>
<feature type="active site" description="Proton donor; shared with dimeric partner" evidence="1">
    <location>
        <position position="357"/>
    </location>
</feature>
<feature type="site" description="Not modified" evidence="3">
    <location>
        <position position="68"/>
    </location>
</feature>
<name>AZIN2_XENLA</name>
<proteinExistence type="evidence at transcript level"/>
<keyword id="KW-0966">Cell projection</keyword>
<keyword id="KW-0963">Cytoplasm</keyword>
<keyword id="KW-0968">Cytoplasmic vesicle</keyword>
<keyword id="KW-0333">Golgi apparatus</keyword>
<keyword id="KW-0472">Membrane</keyword>
<keyword id="KW-0539">Nucleus</keyword>
<keyword id="KW-0620">Polyamine biosynthesis</keyword>
<keyword id="KW-0663">Pyridoxal phosphate</keyword>
<keyword id="KW-1185">Reference proteome</keyword>
<accession>Q9I8S4</accession>
<evidence type="ECO:0000250" key="1"/>
<evidence type="ECO:0000250" key="2">
    <source>
        <dbReference type="UniProtKB" id="D4A693"/>
    </source>
</evidence>
<evidence type="ECO:0000250" key="3">
    <source>
        <dbReference type="UniProtKB" id="O35484"/>
    </source>
</evidence>
<evidence type="ECO:0000250" key="4">
    <source>
        <dbReference type="UniProtKB" id="Q8BVM4"/>
    </source>
</evidence>
<evidence type="ECO:0000250" key="5">
    <source>
        <dbReference type="UniProtKB" id="Q96A70"/>
    </source>
</evidence>
<evidence type="ECO:0000269" key="6">
    <source>
    </source>
</evidence>
<evidence type="ECO:0000305" key="7"/>
<gene>
    <name type="primary">azin2</name>
    <name type="synonym">azi2</name>
    <name type="synonym">odc1-b</name>
    <name type="synonym">odc2</name>
</gene>
<organism>
    <name type="scientific">Xenopus laevis</name>
    <name type="common">African clawed frog</name>
    <dbReference type="NCBI Taxonomy" id="8355"/>
    <lineage>
        <taxon>Eukaryota</taxon>
        <taxon>Metazoa</taxon>
        <taxon>Chordata</taxon>
        <taxon>Craniata</taxon>
        <taxon>Vertebrata</taxon>
        <taxon>Euteleostomi</taxon>
        <taxon>Amphibia</taxon>
        <taxon>Batrachia</taxon>
        <taxon>Anura</taxon>
        <taxon>Pipoidea</taxon>
        <taxon>Pipidae</taxon>
        <taxon>Xenopodinae</taxon>
        <taxon>Xenopus</taxon>
        <taxon>Xenopus</taxon>
    </lineage>
</organism>
<reference key="1">
    <citation type="journal article" date="2001" name="Mech. Dev.">
        <title>Tissue-specific expression of an ornithine decarboxylase paralogue, XODC2, in Xenopus laevis.</title>
        <authorList>
            <person name="Cao Y."/>
            <person name="Zhao H."/>
            <person name="Hollemann T."/>
            <person name="Chen Y."/>
            <person name="Grunz H."/>
        </authorList>
    </citation>
    <scope>NUCLEOTIDE SEQUENCE [MRNA]</scope>
    <scope>DEVELOPMENTAL STAGE</scope>
</reference>
<comment type="function">
    <text evidence="4 5">Antizyme inhibitor (AZI) protein that positively regulates ornithine decarboxylase (ODC) activity and polyamine uptake. AZI is an enzymatically inactive ODC homolog that counteracts the negative effect of ODC antizyme (AZ) on ODC activity by competing with ODC for antizyme-binding. Inhibits antizyme-dependent ODC degradation and releases ODC monomers from their inactive complex with antizymes, leading to formation of the catalytically active ODC homodimer and restoring polyamine production. Participates in the morphological integrity of the trans-Golgi network (TGN) and functions as a regulator of intracellular secretory vesicle trafficking.</text>
</comment>
<comment type="subunit">
    <text evidence="4 5">Monomer. Interacts with OAZ1; this interaction disrupts the interaction between the antizyme and ODC1. Does not form a heterodimer with ODC1.</text>
</comment>
<comment type="subcellular location">
    <subcellularLocation>
        <location evidence="2">Nucleus</location>
    </subcellularLocation>
    <subcellularLocation>
        <location evidence="1">Cytoplasm</location>
    </subcellularLocation>
    <subcellularLocation>
        <location evidence="1">Cytoplasm</location>
        <location evidence="1">Perinuclear region</location>
    </subcellularLocation>
    <subcellularLocation>
        <location evidence="1">Membrane</location>
    </subcellularLocation>
    <subcellularLocation>
        <location evidence="1">Cytoplasmic vesicle</location>
    </subcellularLocation>
    <subcellularLocation>
        <location evidence="1">Endoplasmic reticulum-Golgi intermediate compartment</location>
    </subcellularLocation>
    <subcellularLocation>
        <location evidence="1">Golgi apparatus</location>
        <location evidence="1">cis-Golgi network</location>
    </subcellularLocation>
    <subcellularLocation>
        <location evidence="1">Golgi apparatus</location>
        <location evidence="1">trans-Golgi network</location>
    </subcellularLocation>
    <subcellularLocation>
        <location evidence="2">Cytoplasmic granule</location>
    </subcellularLocation>
    <subcellularLocation>
        <location evidence="1">Cell projection</location>
        <location evidence="1">Axon</location>
    </subcellularLocation>
    <subcellularLocation>
        <location evidence="1">Cell projection</location>
        <location evidence="1">Dendrite</location>
    </subcellularLocation>
    <subcellularLocation>
        <location evidence="1">Perikaryon</location>
    </subcellularLocation>
</comment>
<comment type="developmental stage">
    <text evidence="6">Expression is first detected at the animal pole at stage 9. During neurula stages it is found both in the extreme anterior and posterior part of the dorsal body axis. In tailbud stages the expression is further shifted to both the tail and head areas and gradually restricted to distinct tissues: forebrain, inner layer of epidermis of the head area, stomodeal-hypophyseal anlage, frontal gland, ear vesicle, branchial arches, the front tip of neural tube and proctodeum.</text>
</comment>
<comment type="domain">
    <text evidence="4">The N-terminus domain is necessary for its localization to the ER-Golgi intermediate compartment (ERGIC).</text>
</comment>
<comment type="similarity">
    <text evidence="7">Belongs to the Orn/Lys/Arg decarboxylase class-II family. ODC antizyme inhibitor subfamily.</text>
</comment>
<comment type="caution">
    <text evidence="7">Human ortholog was initially reported to have ornithine decarboxylase or arginine decarboxylase activities, but it was later found that the mouse ortholog does not possess either of them.</text>
</comment>
<protein>
    <recommendedName>
        <fullName>Antizyme inhibitor 2</fullName>
        <shortName>AzI2</shortName>
    </recommendedName>
    <alternativeName>
        <fullName>Ornithine decarboxylase 2</fullName>
        <shortName>ODC 2</shortName>
        <shortName>xODC2</shortName>
    </alternativeName>
    <alternativeName>
        <fullName>Ornithine decarboxylase-like protein</fullName>
        <shortName>ODC-like protein</shortName>
    </alternativeName>
    <alternativeName>
        <fullName>ornithine decarboxylase paralog</fullName>
        <shortName>ODC-p</shortName>
    </alternativeName>
</protein>
<dbReference type="EMBL" id="AF217544">
    <property type="protein sequence ID" value="AAF27628.2"/>
    <property type="molecule type" value="mRNA"/>
</dbReference>
<dbReference type="RefSeq" id="NP_001079692.1">
    <property type="nucleotide sequence ID" value="NM_001086223.1"/>
</dbReference>
<dbReference type="SMR" id="Q9I8S4"/>
<dbReference type="DNASU" id="379379"/>
<dbReference type="GeneID" id="379379"/>
<dbReference type="KEGG" id="xla:379379"/>
<dbReference type="AGR" id="Xenbase:XB-GENE-6493979"/>
<dbReference type="CTD" id="379379"/>
<dbReference type="Xenbase" id="XB-GENE-6493979">
    <property type="gene designation" value="azin2.S"/>
</dbReference>
<dbReference type="OrthoDB" id="5034579at2759"/>
<dbReference type="Proteomes" id="UP000186698">
    <property type="component" value="Chromosome 2S"/>
</dbReference>
<dbReference type="Bgee" id="379379">
    <property type="expression patterns" value="Expressed in testis and 19 other cell types or tissues"/>
</dbReference>
<dbReference type="GO" id="GO:0030424">
    <property type="term" value="C:axon"/>
    <property type="evidence" value="ECO:0000250"/>
    <property type="project" value="UniProtKB"/>
</dbReference>
<dbReference type="GO" id="GO:0005801">
    <property type="term" value="C:cis-Golgi network"/>
    <property type="evidence" value="ECO:0000250"/>
    <property type="project" value="UniProtKB"/>
</dbReference>
<dbReference type="GO" id="GO:0005737">
    <property type="term" value="C:cytoplasm"/>
    <property type="evidence" value="ECO:0000250"/>
    <property type="project" value="UniProtKB"/>
</dbReference>
<dbReference type="GO" id="GO:0031410">
    <property type="term" value="C:cytoplasmic vesicle"/>
    <property type="evidence" value="ECO:0000250"/>
    <property type="project" value="UniProtKB"/>
</dbReference>
<dbReference type="GO" id="GO:0030425">
    <property type="term" value="C:dendrite"/>
    <property type="evidence" value="ECO:0000250"/>
    <property type="project" value="UniProtKB"/>
</dbReference>
<dbReference type="GO" id="GO:0033116">
    <property type="term" value="C:endoplasmic reticulum-Golgi intermediate compartment membrane"/>
    <property type="evidence" value="ECO:0000250"/>
    <property type="project" value="UniProtKB"/>
</dbReference>
<dbReference type="GO" id="GO:1990005">
    <property type="term" value="C:granular vesicle"/>
    <property type="evidence" value="ECO:0000250"/>
    <property type="project" value="UniProtKB"/>
</dbReference>
<dbReference type="GO" id="GO:0005634">
    <property type="term" value="C:nucleus"/>
    <property type="evidence" value="ECO:0000250"/>
    <property type="project" value="UniProtKB"/>
</dbReference>
<dbReference type="GO" id="GO:0043204">
    <property type="term" value="C:perikaryon"/>
    <property type="evidence" value="ECO:0000250"/>
    <property type="project" value="UniProtKB"/>
</dbReference>
<dbReference type="GO" id="GO:0048471">
    <property type="term" value="C:perinuclear region of cytoplasm"/>
    <property type="evidence" value="ECO:0000250"/>
    <property type="project" value="UniProtKB"/>
</dbReference>
<dbReference type="GO" id="GO:0005802">
    <property type="term" value="C:trans-Golgi network"/>
    <property type="evidence" value="ECO:0000250"/>
    <property type="project" value="UniProtKB"/>
</dbReference>
<dbReference type="GO" id="GO:0030133">
    <property type="term" value="C:transport vesicle"/>
    <property type="evidence" value="ECO:0000250"/>
    <property type="project" value="UniProtKB"/>
</dbReference>
<dbReference type="GO" id="GO:0042978">
    <property type="term" value="F:ornithine decarboxylase activator activity"/>
    <property type="evidence" value="ECO:0000250"/>
    <property type="project" value="UniProtKB"/>
</dbReference>
<dbReference type="GO" id="GO:0004586">
    <property type="term" value="F:ornithine decarboxylase activity"/>
    <property type="evidence" value="ECO:0000318"/>
    <property type="project" value="GO_Central"/>
</dbReference>
<dbReference type="GO" id="GO:0043085">
    <property type="term" value="P:positive regulation of catalytic activity"/>
    <property type="evidence" value="ECO:0000250"/>
    <property type="project" value="UniProtKB"/>
</dbReference>
<dbReference type="GO" id="GO:1902269">
    <property type="term" value="P:positive regulation of polyamine transmembrane transport"/>
    <property type="evidence" value="ECO:0000250"/>
    <property type="project" value="UniProtKB"/>
</dbReference>
<dbReference type="GO" id="GO:0033387">
    <property type="term" value="P:putrescine biosynthetic process from arginine, via ornithine"/>
    <property type="evidence" value="ECO:0000318"/>
    <property type="project" value="GO_Central"/>
</dbReference>
<dbReference type="GO" id="GO:0098629">
    <property type="term" value="P:trans-Golgi network membrane organization"/>
    <property type="evidence" value="ECO:0000250"/>
    <property type="project" value="UniProtKB"/>
</dbReference>
<dbReference type="CDD" id="cd00622">
    <property type="entry name" value="PLPDE_III_ODC"/>
    <property type="match status" value="1"/>
</dbReference>
<dbReference type="FunFam" id="2.40.37.10:FF:000005">
    <property type="entry name" value="Ornithine decarboxylase"/>
    <property type="match status" value="1"/>
</dbReference>
<dbReference type="FunFam" id="3.20.20.10:FF:000006">
    <property type="entry name" value="Ornithine decarboxylase 1"/>
    <property type="match status" value="1"/>
</dbReference>
<dbReference type="Gene3D" id="3.20.20.10">
    <property type="entry name" value="Alanine racemase"/>
    <property type="match status" value="1"/>
</dbReference>
<dbReference type="Gene3D" id="2.40.37.10">
    <property type="entry name" value="Lyase, Ornithine Decarboxylase, Chain A, domain 1"/>
    <property type="match status" value="1"/>
</dbReference>
<dbReference type="InterPro" id="IPR009006">
    <property type="entry name" value="Ala_racemase/Decarboxylase_C"/>
</dbReference>
<dbReference type="InterPro" id="IPR022643">
    <property type="entry name" value="De-COase2_C"/>
</dbReference>
<dbReference type="InterPro" id="IPR022657">
    <property type="entry name" value="De-COase2_CS"/>
</dbReference>
<dbReference type="InterPro" id="IPR022644">
    <property type="entry name" value="De-COase2_N"/>
</dbReference>
<dbReference type="InterPro" id="IPR022653">
    <property type="entry name" value="De-COase2_pyr-phos_BS"/>
</dbReference>
<dbReference type="InterPro" id="IPR000183">
    <property type="entry name" value="Orn/DAP/Arg_de-COase"/>
</dbReference>
<dbReference type="InterPro" id="IPR002433">
    <property type="entry name" value="Orn_de-COase"/>
</dbReference>
<dbReference type="InterPro" id="IPR029066">
    <property type="entry name" value="PLP-binding_barrel"/>
</dbReference>
<dbReference type="PANTHER" id="PTHR11482:SF4">
    <property type="entry name" value="ANTIZYME INHIBITOR 2"/>
    <property type="match status" value="1"/>
</dbReference>
<dbReference type="PANTHER" id="PTHR11482">
    <property type="entry name" value="ARGININE/DIAMINOPIMELATE/ORNITHINE DECARBOXYLASE"/>
    <property type="match status" value="1"/>
</dbReference>
<dbReference type="Pfam" id="PF02784">
    <property type="entry name" value="Orn_Arg_deC_N"/>
    <property type="match status" value="1"/>
</dbReference>
<dbReference type="Pfam" id="PF00278">
    <property type="entry name" value="Orn_DAP_Arg_deC"/>
    <property type="match status" value="1"/>
</dbReference>
<dbReference type="PRINTS" id="PR01179">
    <property type="entry name" value="ODADCRBXLASE"/>
</dbReference>
<dbReference type="PRINTS" id="PR01182">
    <property type="entry name" value="ORNDCRBXLASE"/>
</dbReference>
<dbReference type="SUPFAM" id="SSF50621">
    <property type="entry name" value="Alanine racemase C-terminal domain-like"/>
    <property type="match status" value="1"/>
</dbReference>
<dbReference type="SUPFAM" id="SSF51419">
    <property type="entry name" value="PLP-binding barrel"/>
    <property type="match status" value="1"/>
</dbReference>
<dbReference type="PROSITE" id="PS00878">
    <property type="entry name" value="ODR_DC_2_1"/>
    <property type="match status" value="1"/>
</dbReference>
<dbReference type="PROSITE" id="PS00879">
    <property type="entry name" value="ODR_DC_2_2"/>
    <property type="match status" value="1"/>
</dbReference>